<feature type="chain" id="PRO_0000177808" description="D-alanine--D-alanine ligase B">
    <location>
        <begin position="1"/>
        <end position="302"/>
    </location>
</feature>
<feature type="domain" description="ATP-grasp" evidence="2">
    <location>
        <begin position="99"/>
        <end position="294"/>
    </location>
</feature>
<feature type="binding site" evidence="2">
    <location>
        <begin position="126"/>
        <end position="181"/>
    </location>
    <ligand>
        <name>ATP</name>
        <dbReference type="ChEBI" id="CHEBI:30616"/>
    </ligand>
</feature>
<feature type="binding site" evidence="2">
    <location>
        <position position="248"/>
    </location>
    <ligand>
        <name>Mg(2+)</name>
        <dbReference type="ChEBI" id="CHEBI:18420"/>
        <label>1</label>
    </ligand>
</feature>
<feature type="binding site" evidence="2">
    <location>
        <position position="261"/>
    </location>
    <ligand>
        <name>Mg(2+)</name>
        <dbReference type="ChEBI" id="CHEBI:18420"/>
        <label>1</label>
    </ligand>
</feature>
<feature type="binding site" evidence="2">
    <location>
        <position position="261"/>
    </location>
    <ligand>
        <name>Mg(2+)</name>
        <dbReference type="ChEBI" id="CHEBI:18420"/>
        <label>2</label>
    </ligand>
</feature>
<feature type="binding site" evidence="2">
    <location>
        <position position="263"/>
    </location>
    <ligand>
        <name>Mg(2+)</name>
        <dbReference type="ChEBI" id="CHEBI:18420"/>
        <label>2</label>
    </ligand>
</feature>
<name>DDLB_CLOPE</name>
<organism>
    <name type="scientific">Clostridium perfringens (strain 13 / Type A)</name>
    <dbReference type="NCBI Taxonomy" id="195102"/>
    <lineage>
        <taxon>Bacteria</taxon>
        <taxon>Bacillati</taxon>
        <taxon>Bacillota</taxon>
        <taxon>Clostridia</taxon>
        <taxon>Eubacteriales</taxon>
        <taxon>Clostridiaceae</taxon>
        <taxon>Clostridium</taxon>
    </lineage>
</organism>
<sequence length="302" mass="33877">MKVGIIMGGISSEREVSLASGESIFNHIDKEKYEVSKIIINNKIDILEKVKGLDFALLALHGKFGEDGTVQAFLDIMDIPYSGCGALSSSLCMDKNLSKKVLKAENIRTAKWITVKSIEEIDYEKIEEIGYPVFVKPNNGGSSVATFKVYKKEDIKNSVMEGLKYDEEVIIESFIKGREITCPIFNGELFPILEIKSKADFYDYKQKYAANGAEHLPVQLEKSLYDEVKEMALKTFEVLKCEVYARVDMIISEEGVPYILEVNTLPGMTATSLFPQSAESRGISYSKFIDLIIETSLNKKIK</sequence>
<keyword id="KW-0067">ATP-binding</keyword>
<keyword id="KW-0133">Cell shape</keyword>
<keyword id="KW-0961">Cell wall biogenesis/degradation</keyword>
<keyword id="KW-0963">Cytoplasm</keyword>
<keyword id="KW-0436">Ligase</keyword>
<keyword id="KW-0460">Magnesium</keyword>
<keyword id="KW-0464">Manganese</keyword>
<keyword id="KW-0479">Metal-binding</keyword>
<keyword id="KW-0547">Nucleotide-binding</keyword>
<keyword id="KW-0573">Peptidoglycan synthesis</keyword>
<keyword id="KW-1185">Reference proteome</keyword>
<evidence type="ECO:0000250" key="1"/>
<evidence type="ECO:0000255" key="2">
    <source>
        <dbReference type="HAMAP-Rule" id="MF_00047"/>
    </source>
</evidence>
<accession>Q8XM71</accession>
<dbReference type="EC" id="6.3.2.4" evidence="2"/>
<dbReference type="EMBL" id="BA000016">
    <property type="protein sequence ID" value="BAB80525.1"/>
    <property type="molecule type" value="Genomic_DNA"/>
</dbReference>
<dbReference type="RefSeq" id="WP_011010049.1">
    <property type="nucleotide sequence ID" value="NC_003366.1"/>
</dbReference>
<dbReference type="SMR" id="Q8XM71"/>
<dbReference type="STRING" id="195102.gene:10490081"/>
<dbReference type="KEGG" id="cpe:CPE0819"/>
<dbReference type="HOGENOM" id="CLU_039268_1_1_9"/>
<dbReference type="UniPathway" id="UPA00219"/>
<dbReference type="Proteomes" id="UP000000818">
    <property type="component" value="Chromosome"/>
</dbReference>
<dbReference type="GO" id="GO:0005737">
    <property type="term" value="C:cytoplasm"/>
    <property type="evidence" value="ECO:0007669"/>
    <property type="project" value="UniProtKB-SubCell"/>
</dbReference>
<dbReference type="GO" id="GO:0005524">
    <property type="term" value="F:ATP binding"/>
    <property type="evidence" value="ECO:0007669"/>
    <property type="project" value="UniProtKB-KW"/>
</dbReference>
<dbReference type="GO" id="GO:0008716">
    <property type="term" value="F:D-alanine-D-alanine ligase activity"/>
    <property type="evidence" value="ECO:0007669"/>
    <property type="project" value="UniProtKB-UniRule"/>
</dbReference>
<dbReference type="GO" id="GO:0046872">
    <property type="term" value="F:metal ion binding"/>
    <property type="evidence" value="ECO:0007669"/>
    <property type="project" value="UniProtKB-KW"/>
</dbReference>
<dbReference type="GO" id="GO:0071555">
    <property type="term" value="P:cell wall organization"/>
    <property type="evidence" value="ECO:0007669"/>
    <property type="project" value="UniProtKB-KW"/>
</dbReference>
<dbReference type="GO" id="GO:0009252">
    <property type="term" value="P:peptidoglycan biosynthetic process"/>
    <property type="evidence" value="ECO:0007669"/>
    <property type="project" value="UniProtKB-UniRule"/>
</dbReference>
<dbReference type="GO" id="GO:0008360">
    <property type="term" value="P:regulation of cell shape"/>
    <property type="evidence" value="ECO:0007669"/>
    <property type="project" value="UniProtKB-KW"/>
</dbReference>
<dbReference type="FunFam" id="3.40.50.20:FF:000031">
    <property type="entry name" value="D-alanine--D-alanine ligase"/>
    <property type="match status" value="1"/>
</dbReference>
<dbReference type="Gene3D" id="3.40.50.20">
    <property type="match status" value="1"/>
</dbReference>
<dbReference type="Gene3D" id="3.30.1490.20">
    <property type="entry name" value="ATP-grasp fold, A domain"/>
    <property type="match status" value="1"/>
</dbReference>
<dbReference type="Gene3D" id="3.30.470.20">
    <property type="entry name" value="ATP-grasp fold, B domain"/>
    <property type="match status" value="1"/>
</dbReference>
<dbReference type="HAMAP" id="MF_00047">
    <property type="entry name" value="Dala_Dala_lig"/>
    <property type="match status" value="1"/>
</dbReference>
<dbReference type="InterPro" id="IPR011761">
    <property type="entry name" value="ATP-grasp"/>
</dbReference>
<dbReference type="InterPro" id="IPR013815">
    <property type="entry name" value="ATP_grasp_subdomain_1"/>
</dbReference>
<dbReference type="InterPro" id="IPR000291">
    <property type="entry name" value="D-Ala_lig_Van_CS"/>
</dbReference>
<dbReference type="InterPro" id="IPR005905">
    <property type="entry name" value="D_ala_D_ala"/>
</dbReference>
<dbReference type="InterPro" id="IPR011095">
    <property type="entry name" value="Dala_Dala_lig_C"/>
</dbReference>
<dbReference type="InterPro" id="IPR011127">
    <property type="entry name" value="Dala_Dala_lig_N"/>
</dbReference>
<dbReference type="InterPro" id="IPR016185">
    <property type="entry name" value="PreATP-grasp_dom_sf"/>
</dbReference>
<dbReference type="NCBIfam" id="TIGR01205">
    <property type="entry name" value="D_ala_D_alaTIGR"/>
    <property type="match status" value="1"/>
</dbReference>
<dbReference type="NCBIfam" id="NF002378">
    <property type="entry name" value="PRK01372.1"/>
    <property type="match status" value="1"/>
</dbReference>
<dbReference type="PANTHER" id="PTHR23132">
    <property type="entry name" value="D-ALANINE--D-ALANINE LIGASE"/>
    <property type="match status" value="1"/>
</dbReference>
<dbReference type="PANTHER" id="PTHR23132:SF23">
    <property type="entry name" value="D-ALANINE--D-ALANINE LIGASE B"/>
    <property type="match status" value="1"/>
</dbReference>
<dbReference type="Pfam" id="PF07478">
    <property type="entry name" value="Dala_Dala_lig_C"/>
    <property type="match status" value="1"/>
</dbReference>
<dbReference type="Pfam" id="PF01820">
    <property type="entry name" value="Dala_Dala_lig_N"/>
    <property type="match status" value="2"/>
</dbReference>
<dbReference type="PIRSF" id="PIRSF039102">
    <property type="entry name" value="Ddl/VanB"/>
    <property type="match status" value="1"/>
</dbReference>
<dbReference type="SUPFAM" id="SSF56059">
    <property type="entry name" value="Glutathione synthetase ATP-binding domain-like"/>
    <property type="match status" value="1"/>
</dbReference>
<dbReference type="SUPFAM" id="SSF52440">
    <property type="entry name" value="PreATP-grasp domain"/>
    <property type="match status" value="1"/>
</dbReference>
<dbReference type="PROSITE" id="PS50975">
    <property type="entry name" value="ATP_GRASP"/>
    <property type="match status" value="1"/>
</dbReference>
<dbReference type="PROSITE" id="PS00843">
    <property type="entry name" value="DALA_DALA_LIGASE_1"/>
    <property type="match status" value="1"/>
</dbReference>
<dbReference type="PROSITE" id="PS00844">
    <property type="entry name" value="DALA_DALA_LIGASE_2"/>
    <property type="match status" value="1"/>
</dbReference>
<comment type="function">
    <text evidence="2">Cell wall formation.</text>
</comment>
<comment type="catalytic activity">
    <reaction evidence="2">
        <text>2 D-alanine + ATP = D-alanyl-D-alanine + ADP + phosphate + H(+)</text>
        <dbReference type="Rhea" id="RHEA:11224"/>
        <dbReference type="ChEBI" id="CHEBI:15378"/>
        <dbReference type="ChEBI" id="CHEBI:30616"/>
        <dbReference type="ChEBI" id="CHEBI:43474"/>
        <dbReference type="ChEBI" id="CHEBI:57416"/>
        <dbReference type="ChEBI" id="CHEBI:57822"/>
        <dbReference type="ChEBI" id="CHEBI:456216"/>
        <dbReference type="EC" id="6.3.2.4"/>
    </reaction>
</comment>
<comment type="cofactor">
    <cofactor evidence="1">
        <name>Mg(2+)</name>
        <dbReference type="ChEBI" id="CHEBI:18420"/>
    </cofactor>
    <cofactor evidence="1">
        <name>Mn(2+)</name>
        <dbReference type="ChEBI" id="CHEBI:29035"/>
    </cofactor>
    <text evidence="1">Binds 2 magnesium or manganese ions per subunit.</text>
</comment>
<comment type="pathway">
    <text evidence="2">Cell wall biogenesis; peptidoglycan biosynthesis.</text>
</comment>
<comment type="subcellular location">
    <subcellularLocation>
        <location evidence="2">Cytoplasm</location>
    </subcellularLocation>
</comment>
<comment type="similarity">
    <text evidence="2">Belongs to the D-alanine--D-alanine ligase family.</text>
</comment>
<proteinExistence type="inferred from homology"/>
<gene>
    <name evidence="2" type="primary">ddlB</name>
    <name type="ordered locus">CPE0819</name>
</gene>
<protein>
    <recommendedName>
        <fullName evidence="2">D-alanine--D-alanine ligase B</fullName>
        <ecNumber evidence="2">6.3.2.4</ecNumber>
    </recommendedName>
    <alternativeName>
        <fullName evidence="2">D-Ala-D-Ala ligase B</fullName>
    </alternativeName>
    <alternativeName>
        <fullName evidence="2">D-alanylalanine synthetaseB</fullName>
    </alternativeName>
</protein>
<reference key="1">
    <citation type="journal article" date="2002" name="Proc. Natl. Acad. Sci. U.S.A.">
        <title>Complete genome sequence of Clostridium perfringens, an anaerobic flesh-eater.</title>
        <authorList>
            <person name="Shimizu T."/>
            <person name="Ohtani K."/>
            <person name="Hirakawa H."/>
            <person name="Ohshima K."/>
            <person name="Yamashita A."/>
            <person name="Shiba T."/>
            <person name="Ogasawara N."/>
            <person name="Hattori M."/>
            <person name="Kuhara S."/>
            <person name="Hayashi H."/>
        </authorList>
    </citation>
    <scope>NUCLEOTIDE SEQUENCE [LARGE SCALE GENOMIC DNA]</scope>
    <source>
        <strain>13 / Type A</strain>
    </source>
</reference>